<gene>
    <name evidence="9" type="primary">GDE1</name>
    <name type="ordered locus">YPL110C</name>
</gene>
<keyword id="KW-0040">ANK repeat</keyword>
<keyword id="KW-0963">Cytoplasm</keyword>
<keyword id="KW-0378">Hydrolase</keyword>
<keyword id="KW-0597">Phosphoprotein</keyword>
<keyword id="KW-1185">Reference proteome</keyword>
<keyword id="KW-0677">Repeat</keyword>
<dbReference type="EC" id="3.1.4.2" evidence="11"/>
<dbReference type="EMBL" id="U43503">
    <property type="protein sequence ID" value="AAB68251.1"/>
    <property type="molecule type" value="Genomic_DNA"/>
</dbReference>
<dbReference type="EMBL" id="BK006949">
    <property type="protein sequence ID" value="DAA11323.1"/>
    <property type="molecule type" value="Genomic_DNA"/>
</dbReference>
<dbReference type="PIR" id="S62011">
    <property type="entry name" value="S62011"/>
</dbReference>
<dbReference type="RefSeq" id="NP_015215.1">
    <property type="nucleotide sequence ID" value="NM_001183924.1"/>
</dbReference>
<dbReference type="SMR" id="Q02979"/>
<dbReference type="BioGRID" id="36071">
    <property type="interactions" value="89"/>
</dbReference>
<dbReference type="DIP" id="DIP-8774N"/>
<dbReference type="FunCoup" id="Q02979">
    <property type="interactions" value="222"/>
</dbReference>
<dbReference type="IntAct" id="Q02979">
    <property type="interactions" value="15"/>
</dbReference>
<dbReference type="MINT" id="Q02979"/>
<dbReference type="STRING" id="4932.YPL110C"/>
<dbReference type="SwissLipids" id="SLP:000000074"/>
<dbReference type="GlyGen" id="Q02979">
    <property type="glycosylation" value="2 sites, 1 O-linked glycan (2 sites)"/>
</dbReference>
<dbReference type="iPTMnet" id="Q02979"/>
<dbReference type="PaxDb" id="4932-YPL110C"/>
<dbReference type="PeptideAtlas" id="Q02979"/>
<dbReference type="EnsemblFungi" id="YPL110C_mRNA">
    <property type="protein sequence ID" value="YPL110C"/>
    <property type="gene ID" value="YPL110C"/>
</dbReference>
<dbReference type="GeneID" id="855994"/>
<dbReference type="KEGG" id="sce:YPL110C"/>
<dbReference type="AGR" id="SGD:S000006031"/>
<dbReference type="SGD" id="S000006031">
    <property type="gene designation" value="GDE1"/>
</dbReference>
<dbReference type="VEuPathDB" id="FungiDB:YPL110C"/>
<dbReference type="eggNOG" id="KOG0504">
    <property type="taxonomic scope" value="Eukaryota"/>
</dbReference>
<dbReference type="eggNOG" id="KOG1162">
    <property type="taxonomic scope" value="Eukaryota"/>
</dbReference>
<dbReference type="eggNOG" id="KOG2421">
    <property type="taxonomic scope" value="Eukaryota"/>
</dbReference>
<dbReference type="GeneTree" id="ENSGT00440000033970"/>
<dbReference type="HOGENOM" id="CLU_005444_1_0_1"/>
<dbReference type="InParanoid" id="Q02979"/>
<dbReference type="OMA" id="WTPMEHA"/>
<dbReference type="OrthoDB" id="197419at2759"/>
<dbReference type="BioCyc" id="MetaCyc:G3O-34012-MONOMER"/>
<dbReference type="BioCyc" id="YEAST:G3O-34012-MONOMER"/>
<dbReference type="BRENDA" id="3.1.4.46">
    <property type="organism ID" value="984"/>
</dbReference>
<dbReference type="BioGRID-ORCS" id="855994">
    <property type="hits" value="0 hits in 10 CRISPR screens"/>
</dbReference>
<dbReference type="PRO" id="PR:Q02979"/>
<dbReference type="Proteomes" id="UP000002311">
    <property type="component" value="Chromosome XVI"/>
</dbReference>
<dbReference type="RNAct" id="Q02979">
    <property type="molecule type" value="protein"/>
</dbReference>
<dbReference type="GO" id="GO:0005737">
    <property type="term" value="C:cytoplasm"/>
    <property type="evidence" value="ECO:0007005"/>
    <property type="project" value="SGD"/>
</dbReference>
<dbReference type="GO" id="GO:0047389">
    <property type="term" value="F:glycerophosphocholine phosphodiesterase activity"/>
    <property type="evidence" value="ECO:0000315"/>
    <property type="project" value="SGD"/>
</dbReference>
<dbReference type="GO" id="GO:0047395">
    <property type="term" value="F:glycerophosphoinositol glycerophosphodiesterase activity"/>
    <property type="evidence" value="ECO:0007669"/>
    <property type="project" value="RHEA"/>
</dbReference>
<dbReference type="GO" id="GO:0046475">
    <property type="term" value="P:glycerophospholipid catabolic process"/>
    <property type="evidence" value="ECO:0000315"/>
    <property type="project" value="SGD"/>
</dbReference>
<dbReference type="CDD" id="cd08606">
    <property type="entry name" value="GDPD_YPL110cp_fungi"/>
    <property type="match status" value="1"/>
</dbReference>
<dbReference type="CDD" id="cd14484">
    <property type="entry name" value="SPX_GDE1_like"/>
    <property type="match status" value="1"/>
</dbReference>
<dbReference type="FunFam" id="1.25.40.20:FF:000421">
    <property type="entry name" value="Glycerophosphocholine phosphodiesterase GDE1"/>
    <property type="match status" value="1"/>
</dbReference>
<dbReference type="Gene3D" id="1.25.40.20">
    <property type="entry name" value="Ankyrin repeat-containing domain"/>
    <property type="match status" value="2"/>
</dbReference>
<dbReference type="Gene3D" id="3.20.20.190">
    <property type="entry name" value="Phosphatidylinositol (PI) phosphodiesterase"/>
    <property type="match status" value="1"/>
</dbReference>
<dbReference type="InterPro" id="IPR002110">
    <property type="entry name" value="Ankyrin_rpt"/>
</dbReference>
<dbReference type="InterPro" id="IPR036770">
    <property type="entry name" value="Ankyrin_rpt-contain_sf"/>
</dbReference>
<dbReference type="InterPro" id="IPR051578">
    <property type="entry name" value="GDPD"/>
</dbReference>
<dbReference type="InterPro" id="IPR030395">
    <property type="entry name" value="GP_PDE_dom"/>
</dbReference>
<dbReference type="InterPro" id="IPR017946">
    <property type="entry name" value="PLC-like_Pdiesterase_TIM-brl"/>
</dbReference>
<dbReference type="InterPro" id="IPR004331">
    <property type="entry name" value="SPX_dom"/>
</dbReference>
<dbReference type="PANTHER" id="PTHR22958:SF1">
    <property type="entry name" value="GLYCEROPHOSPHOCHOLINE PHOSPHODIESTERASE GPCPD1"/>
    <property type="match status" value="1"/>
</dbReference>
<dbReference type="PANTHER" id="PTHR22958">
    <property type="entry name" value="GLYCEROPHOSPHORYL DIESTER PHOSPHODIESTERASE"/>
    <property type="match status" value="1"/>
</dbReference>
<dbReference type="Pfam" id="PF12796">
    <property type="entry name" value="Ank_2"/>
    <property type="match status" value="1"/>
</dbReference>
<dbReference type="Pfam" id="PF25329">
    <property type="entry name" value="C2_GDE1"/>
    <property type="match status" value="1"/>
</dbReference>
<dbReference type="Pfam" id="PF03009">
    <property type="entry name" value="GDPD"/>
    <property type="match status" value="1"/>
</dbReference>
<dbReference type="Pfam" id="PF03105">
    <property type="entry name" value="SPX"/>
    <property type="match status" value="2"/>
</dbReference>
<dbReference type="SMART" id="SM00248">
    <property type="entry name" value="ANK"/>
    <property type="match status" value="7"/>
</dbReference>
<dbReference type="SUPFAM" id="SSF48403">
    <property type="entry name" value="Ankyrin repeat"/>
    <property type="match status" value="1"/>
</dbReference>
<dbReference type="SUPFAM" id="SSF51695">
    <property type="entry name" value="PLC-like phosphodiesterases"/>
    <property type="match status" value="1"/>
</dbReference>
<dbReference type="PROSITE" id="PS50297">
    <property type="entry name" value="ANK_REP_REGION"/>
    <property type="match status" value="1"/>
</dbReference>
<dbReference type="PROSITE" id="PS50088">
    <property type="entry name" value="ANK_REPEAT"/>
    <property type="match status" value="2"/>
</dbReference>
<dbReference type="PROSITE" id="PS51704">
    <property type="entry name" value="GP_PDE"/>
    <property type="match status" value="1"/>
</dbReference>
<dbReference type="PROSITE" id="PS51382">
    <property type="entry name" value="SPX"/>
    <property type="match status" value="1"/>
</dbReference>
<comment type="function">
    <text evidence="7 8">Glycerophosphocholine glycerophosphodiesterase responsible for the hydrolysis of intracellular glycerophosphocholine into glycerol-phosphate and choline (PubMed:16141200, PubMed:16172116). The choline is used for phosphatidyl-choline synthesis. Required for utilization of glycerophosphocholine as phosphate source (PubMed:16141200). May also use glycerophosphoinositol as substrate in vivo (PubMed:16172116).</text>
</comment>
<comment type="catalytic activity">
    <reaction evidence="7">
        <text>sn-glycerol 3-phosphocholine + H2O = sn-glycerol 3-phosphate + choline + H(+)</text>
        <dbReference type="Rhea" id="RHEA:16061"/>
        <dbReference type="ChEBI" id="CHEBI:15354"/>
        <dbReference type="ChEBI" id="CHEBI:15377"/>
        <dbReference type="ChEBI" id="CHEBI:15378"/>
        <dbReference type="ChEBI" id="CHEBI:16870"/>
        <dbReference type="ChEBI" id="CHEBI:57597"/>
        <dbReference type="EC" id="3.1.4.2"/>
    </reaction>
    <physiologicalReaction direction="left-to-right" evidence="11">
        <dbReference type="Rhea" id="RHEA:16062"/>
    </physiologicalReaction>
</comment>
<comment type="catalytic activity">
    <reaction evidence="12">
        <text>sn-glycero-3-phospho-1D-myo-inositol + H2O = myo-inositol + sn-glycerol 3-phosphate + H(+)</text>
        <dbReference type="Rhea" id="RHEA:16501"/>
        <dbReference type="ChEBI" id="CHEBI:15377"/>
        <dbReference type="ChEBI" id="CHEBI:15378"/>
        <dbReference type="ChEBI" id="CHEBI:17268"/>
        <dbReference type="ChEBI" id="CHEBI:57597"/>
        <dbReference type="ChEBI" id="CHEBI:58444"/>
    </reaction>
    <physiologicalReaction direction="left-to-right" evidence="12">
        <dbReference type="Rhea" id="RHEA:16502"/>
    </physiologicalReaction>
</comment>
<comment type="cofactor">
    <cofactor evidence="3">
        <name>a divalent metal cation</name>
        <dbReference type="ChEBI" id="CHEBI:60240"/>
    </cofactor>
</comment>
<comment type="subcellular location">
    <subcellularLocation>
        <location evidence="5">Cytoplasm</location>
    </subcellularLocation>
</comment>
<comment type="disruption phenotype">
    <text>Affects the glycerophosphocholine metabolism but not the glycerophosphoinositol metabolism (PubMed:16141200).</text>
</comment>
<comment type="miscellaneous">
    <text evidence="6">Present with 2300 molecules/cell in log phase SD medium.</text>
</comment>
<comment type="similarity">
    <text evidence="10">Belongs to the GDE1 family.</text>
</comment>
<evidence type="ECO:0000255" key="1"/>
<evidence type="ECO:0000255" key="2">
    <source>
        <dbReference type="PROSITE-ProRule" id="PRU00714"/>
    </source>
</evidence>
<evidence type="ECO:0000255" key="3">
    <source>
        <dbReference type="PROSITE-ProRule" id="PRU01041"/>
    </source>
</evidence>
<evidence type="ECO:0000256" key="4">
    <source>
        <dbReference type="SAM" id="MobiDB-lite"/>
    </source>
</evidence>
<evidence type="ECO:0000269" key="5">
    <source>
    </source>
</evidence>
<evidence type="ECO:0000269" key="6">
    <source>
    </source>
</evidence>
<evidence type="ECO:0000269" key="7">
    <source>
    </source>
</evidence>
<evidence type="ECO:0000269" key="8">
    <source>
    </source>
</evidence>
<evidence type="ECO:0000303" key="9">
    <source>
    </source>
</evidence>
<evidence type="ECO:0000305" key="10"/>
<evidence type="ECO:0000305" key="11">
    <source>
    </source>
</evidence>
<evidence type="ECO:0000305" key="12">
    <source>
    </source>
</evidence>
<evidence type="ECO:0007744" key="13">
    <source>
    </source>
</evidence>
<evidence type="ECO:0007744" key="14">
    <source>
    </source>
</evidence>
<accession>Q02979</accession>
<accession>D6W3Q7</accession>
<sequence length="1223" mass="138014">MKFGKTFANHRIPEWSSQYVGYKSLKKMIKEITRLQEDIYRAHNKNSYDEGRPPTKMRDSSNSAQNYLDSPKIQKLLASFFFAVDRDIEKVDTFYNSQYAEYKKRFERLLSSNQFNEIKSTLVVDANKEDAVAQTLLTKDTREMNMLLKGTSQASRLSYHKDDLIEIQSILAELRKQFRNLKWYAELNKRAFGKILKKLDKKVGTNQQMSTMKTRILPLQFANDSLITKDLSLLKTIWEQVTFRINSYERVMRSTSPNANANDNTEFFKIICVFIEEDDSKGLIRELTNLYSELSLIPTRIMISVLNKAALSKSLACIDAILKVIPSLNDSEDINRRNFFHHHIIAIGKLIRKQEILSRKKKSQPSKYTNSEGEIVTDLRTLHTTLSAPAESDSITEEEKSSACTLSYILEELPIHLRPCLFQHDNYKRTPLHYSCQYGLSEVTKLIIKLMKEWNIWNEIPIDDVSAFGDAESLTPLHLCVLGAHPKTTEVLLQSLDPNVKLKSSSLLHLATEWNNYPLLHVLLSSKRFDINYQDNELHETPLYLACRLNFFEAAVCLLYNGADLEIREKLFGWTAIFVAAAEGFTDIVKLLIANNANFDIEDEGGWTPMEHAVLRGHLHIADMVQIRDELVTHPHSQLNSGSEEKEPLNEISAGELNERNENGNGGNKGSLGKLAGPIKSYGHRFLDNNESLILITLGSNDTRNKSPSISLSSEALAKVIGLETDCALSLVISCNDSIDKSSVILDLPLDDNVDAVDFKVPFKVDYSHTLYFDIVPTYGTRSLETHNRIDCQKNNNNYVMARGVSMLNKSYSSVGVNRSILNGSVTVPIIANHTLEILGTLKFEYIIITPFEHPQLPLERTETYWKSLVSTRVIGHRGLGKNNPNKSLQIGENTVESFIMAASLGASYVEFDVQLTKDNVPVVYHDFLVAETGVDIPMHELTLEQFLDLNNADKEHIQRGAGHSPHHVNGADTALQKYRGRSVDDSDVSTLRRAWDLHDNDPNGKSNNAHWSDNRMRLTKTFKKNNFKGNARGHSIASSFVTLKELFKKIPANVGFNIECKFPMLDEAEEEELGQIMMEMNHWVDTVLKVVFDNANGRDIIFSSFHPDICIMLSLKQPVIPILFLTEGGSEQMADLRASSLQNGIRFAKKWNLLGIVSAAAPILKAPRLVQVVKSNGLVCVTYGVDNNDPENASIQIEAGVDAVIVDSVLAIRRGLTKKNEK</sequence>
<protein>
    <recommendedName>
        <fullName evidence="9">Glycerophosphocholine phosphodiesterase GDE1</fullName>
        <ecNumber evidence="11">3.1.4.2</ecNumber>
    </recommendedName>
    <alternativeName>
        <fullName>Glycerophosphodiester phosphodiesterase GDE1</fullName>
    </alternativeName>
</protein>
<feature type="chain" id="PRO_0000233009" description="Glycerophosphocholine phosphodiesterase GDE1">
    <location>
        <begin position="1"/>
        <end position="1223"/>
    </location>
</feature>
<feature type="domain" description="SPX" evidence="2">
    <location>
        <begin position="1"/>
        <end position="213"/>
    </location>
</feature>
<feature type="repeat" description="ANK 1" evidence="1">
    <location>
        <begin position="427"/>
        <end position="456"/>
    </location>
</feature>
<feature type="repeat" description="ANK 2" evidence="1">
    <location>
        <begin position="472"/>
        <end position="502"/>
    </location>
</feature>
<feature type="repeat" description="ANK 3" evidence="1">
    <location>
        <begin position="504"/>
        <end position="533"/>
    </location>
</feature>
<feature type="repeat" description="ANK 4" evidence="1">
    <location>
        <begin position="538"/>
        <end position="567"/>
    </location>
</feature>
<feature type="repeat" description="ANK 5" evidence="1">
    <location>
        <begin position="572"/>
        <end position="601"/>
    </location>
</feature>
<feature type="repeat" description="ANK 6" evidence="1">
    <location>
        <begin position="605"/>
        <end position="634"/>
    </location>
</feature>
<feature type="domain" description="GP-PDE" evidence="3">
    <location>
        <begin position="872"/>
        <end position="1217"/>
    </location>
</feature>
<feature type="region of interest" description="Disordered" evidence="4">
    <location>
        <begin position="43"/>
        <end position="64"/>
    </location>
</feature>
<feature type="compositionally biased region" description="Basic and acidic residues" evidence="4">
    <location>
        <begin position="43"/>
        <end position="59"/>
    </location>
</feature>
<feature type="binding site" evidence="3">
    <location>
        <position position="911"/>
    </location>
    <ligand>
        <name>a divalent metal cation</name>
        <dbReference type="ChEBI" id="CHEBI:60240"/>
    </ligand>
</feature>
<feature type="binding site" evidence="3">
    <location>
        <position position="913"/>
    </location>
    <ligand>
        <name>a divalent metal cation</name>
        <dbReference type="ChEBI" id="CHEBI:60240"/>
    </ligand>
</feature>
<feature type="binding site" evidence="3">
    <location>
        <position position="926"/>
    </location>
    <ligand>
        <name>a divalent metal cation</name>
        <dbReference type="ChEBI" id="CHEBI:60240"/>
    </ligand>
</feature>
<feature type="modified residue" description="Phosphoserine" evidence="13">
    <location>
        <position position="653"/>
    </location>
</feature>
<feature type="modified residue" description="Phosphoserine" evidence="14">
    <location>
        <position position="983"/>
    </location>
</feature>
<name>GDE1_YEAST</name>
<reference key="1">
    <citation type="journal article" date="1997" name="Nature">
        <title>The nucleotide sequence of Saccharomyces cerevisiae chromosome XVI.</title>
        <authorList>
            <person name="Bussey H."/>
            <person name="Storms R.K."/>
            <person name="Ahmed A."/>
            <person name="Albermann K."/>
            <person name="Allen E."/>
            <person name="Ansorge W."/>
            <person name="Araujo R."/>
            <person name="Aparicio A."/>
            <person name="Barrell B.G."/>
            <person name="Badcock K."/>
            <person name="Benes V."/>
            <person name="Botstein D."/>
            <person name="Bowman S."/>
            <person name="Brueckner M."/>
            <person name="Carpenter J."/>
            <person name="Cherry J.M."/>
            <person name="Chung E."/>
            <person name="Churcher C.M."/>
            <person name="Coster F."/>
            <person name="Davis K."/>
            <person name="Davis R.W."/>
            <person name="Dietrich F.S."/>
            <person name="Delius H."/>
            <person name="DiPaolo T."/>
            <person name="Dubois E."/>
            <person name="Duesterhoeft A."/>
            <person name="Duncan M."/>
            <person name="Floeth M."/>
            <person name="Fortin N."/>
            <person name="Friesen J.D."/>
            <person name="Fritz C."/>
            <person name="Goffeau A."/>
            <person name="Hall J."/>
            <person name="Hebling U."/>
            <person name="Heumann K."/>
            <person name="Hilbert H."/>
            <person name="Hillier L.W."/>
            <person name="Hunicke-Smith S."/>
            <person name="Hyman R.W."/>
            <person name="Johnston M."/>
            <person name="Kalman S."/>
            <person name="Kleine K."/>
            <person name="Komp C."/>
            <person name="Kurdi O."/>
            <person name="Lashkari D."/>
            <person name="Lew H."/>
            <person name="Lin A."/>
            <person name="Lin D."/>
            <person name="Louis E.J."/>
            <person name="Marathe R."/>
            <person name="Messenguy F."/>
            <person name="Mewes H.-W."/>
            <person name="Mirtipati S."/>
            <person name="Moestl D."/>
            <person name="Mueller-Auer S."/>
            <person name="Namath A."/>
            <person name="Nentwich U."/>
            <person name="Oefner P."/>
            <person name="Pearson D."/>
            <person name="Petel F.X."/>
            <person name="Pohl T.M."/>
            <person name="Purnelle B."/>
            <person name="Rajandream M.A."/>
            <person name="Rechmann S."/>
            <person name="Rieger M."/>
            <person name="Riles L."/>
            <person name="Roberts D."/>
            <person name="Schaefer M."/>
            <person name="Scharfe M."/>
            <person name="Scherens B."/>
            <person name="Schramm S."/>
            <person name="Schroeder M."/>
            <person name="Sdicu A.-M."/>
            <person name="Tettelin H."/>
            <person name="Urrestarazu L.A."/>
            <person name="Ushinsky S."/>
            <person name="Vierendeels F."/>
            <person name="Vissers S."/>
            <person name="Voss H."/>
            <person name="Walsh S.V."/>
            <person name="Wambutt R."/>
            <person name="Wang Y."/>
            <person name="Wedler E."/>
            <person name="Wedler H."/>
            <person name="Winnett E."/>
            <person name="Zhong W.-W."/>
            <person name="Zollner A."/>
            <person name="Vo D.H."/>
            <person name="Hani J."/>
        </authorList>
    </citation>
    <scope>NUCLEOTIDE SEQUENCE [LARGE SCALE GENOMIC DNA]</scope>
    <source>
        <strain>ATCC 204508 / S288c</strain>
    </source>
</reference>
<reference key="2">
    <citation type="journal article" date="2014" name="G3 (Bethesda)">
        <title>The reference genome sequence of Saccharomyces cerevisiae: Then and now.</title>
        <authorList>
            <person name="Engel S.R."/>
            <person name="Dietrich F.S."/>
            <person name="Fisk D.G."/>
            <person name="Binkley G."/>
            <person name="Balakrishnan R."/>
            <person name="Costanzo M.C."/>
            <person name="Dwight S.S."/>
            <person name="Hitz B.C."/>
            <person name="Karra K."/>
            <person name="Nash R.S."/>
            <person name="Weng S."/>
            <person name="Wong E.D."/>
            <person name="Lloyd P."/>
            <person name="Skrzypek M.S."/>
            <person name="Miyasato S.R."/>
            <person name="Simison M."/>
            <person name="Cherry J.M."/>
        </authorList>
    </citation>
    <scope>GENOME REANNOTATION</scope>
    <source>
        <strain>ATCC 204508 / S288c</strain>
    </source>
</reference>
<reference key="3">
    <citation type="journal article" date="2003" name="Nature">
        <title>Global analysis of protein localization in budding yeast.</title>
        <authorList>
            <person name="Huh W.-K."/>
            <person name="Falvo J.V."/>
            <person name="Gerke L.C."/>
            <person name="Carroll A.S."/>
            <person name="Howson R.W."/>
            <person name="Weissman J.S."/>
            <person name="O'Shea E.K."/>
        </authorList>
    </citation>
    <scope>SUBCELLULAR LOCATION [LARGE SCALE ANALYSIS]</scope>
</reference>
<reference key="4">
    <citation type="journal article" date="2003" name="Nature">
        <title>Global analysis of protein expression in yeast.</title>
        <authorList>
            <person name="Ghaemmaghami S."/>
            <person name="Huh W.-K."/>
            <person name="Bower K."/>
            <person name="Howson R.W."/>
            <person name="Belle A."/>
            <person name="Dephoure N."/>
            <person name="O'Shea E.K."/>
            <person name="Weissman J.S."/>
        </authorList>
    </citation>
    <scope>LEVEL OF PROTEIN EXPRESSION [LARGE SCALE ANALYSIS]</scope>
</reference>
<reference key="5">
    <citation type="journal article" date="2005" name="J. Biol. Chem.">
        <title>Glycerophosphocholine-dependent growth requires Gde1p (YPL110c) and Git1p in Saccharomyces cerevisiae.</title>
        <authorList>
            <person name="Fisher E."/>
            <person name="Almaguer C."/>
            <person name="Holic R."/>
            <person name="Griac P."/>
            <person name="Patton-Vogt J."/>
        </authorList>
    </citation>
    <scope>FUNCTION</scope>
    <scope>CATALYTIC ACTIVITY</scope>
    <scope>DISRUPTION PHENOTYPE</scope>
</reference>
<reference key="6">
    <citation type="journal article" date="2005" name="J. Biol. Chem.">
        <title>Glycerophosphocholine catabolism as a new route for choline formation for phosphatidylcholine synthesis by the Kennedy pathway.</title>
        <authorList>
            <person name="Fernandez-Murray J.P."/>
            <person name="McMaster C.R."/>
        </authorList>
    </citation>
    <scope>FUNCTION</scope>
    <scope>CATALYTIC ACTIVITY</scope>
</reference>
<reference key="7">
    <citation type="journal article" date="2007" name="J. Proteome Res.">
        <title>Large-scale phosphorylation analysis of alpha-factor-arrested Saccharomyces cerevisiae.</title>
        <authorList>
            <person name="Li X."/>
            <person name="Gerber S.A."/>
            <person name="Rudner A.D."/>
            <person name="Beausoleil S.A."/>
            <person name="Haas W."/>
            <person name="Villen J."/>
            <person name="Elias J.E."/>
            <person name="Gygi S.P."/>
        </authorList>
    </citation>
    <scope>IDENTIFICATION BY MASS SPECTROMETRY [LARGE SCALE ANALYSIS]</scope>
    <source>
        <strain>ADR376</strain>
    </source>
</reference>
<reference key="8">
    <citation type="journal article" date="2008" name="Mol. Cell. Proteomics">
        <title>A multidimensional chromatography technology for in-depth phosphoproteome analysis.</title>
        <authorList>
            <person name="Albuquerque C.P."/>
            <person name="Smolka M.B."/>
            <person name="Payne S.H."/>
            <person name="Bafna V."/>
            <person name="Eng J."/>
            <person name="Zhou H."/>
        </authorList>
    </citation>
    <scope>PHOSPHORYLATION [LARGE SCALE ANALYSIS] AT SER-653</scope>
    <scope>IDENTIFICATION BY MASS SPECTROMETRY [LARGE SCALE ANALYSIS]</scope>
</reference>
<reference key="9">
    <citation type="journal article" date="2009" name="Science">
        <title>Global analysis of Cdk1 substrate phosphorylation sites provides insights into evolution.</title>
        <authorList>
            <person name="Holt L.J."/>
            <person name="Tuch B.B."/>
            <person name="Villen J."/>
            <person name="Johnson A.D."/>
            <person name="Gygi S.P."/>
            <person name="Morgan D.O."/>
        </authorList>
    </citation>
    <scope>PHOSPHORYLATION [LARGE SCALE ANALYSIS] AT SER-983</scope>
    <scope>IDENTIFICATION BY MASS SPECTROMETRY [LARGE SCALE ANALYSIS]</scope>
</reference>
<proteinExistence type="evidence at protein level"/>
<organism>
    <name type="scientific">Saccharomyces cerevisiae (strain ATCC 204508 / S288c)</name>
    <name type="common">Baker's yeast</name>
    <dbReference type="NCBI Taxonomy" id="559292"/>
    <lineage>
        <taxon>Eukaryota</taxon>
        <taxon>Fungi</taxon>
        <taxon>Dikarya</taxon>
        <taxon>Ascomycota</taxon>
        <taxon>Saccharomycotina</taxon>
        <taxon>Saccharomycetes</taxon>
        <taxon>Saccharomycetales</taxon>
        <taxon>Saccharomycetaceae</taxon>
        <taxon>Saccharomyces</taxon>
    </lineage>
</organism>